<dbReference type="EMBL" id="U53875">
    <property type="protein sequence ID" value="AAC51335.1"/>
    <property type="molecule type" value="Genomic_DNA"/>
</dbReference>
<dbReference type="RefSeq" id="XP_003921059.1">
    <property type="nucleotide sequence ID" value="XM_003921010.3"/>
</dbReference>
<dbReference type="SMR" id="O13092"/>
<dbReference type="STRING" id="39432.ENSSBOP00000010602"/>
<dbReference type="GlyCosmos" id="O13092">
    <property type="glycosylation" value="1 site, No reported glycans"/>
</dbReference>
<dbReference type="Ensembl" id="ENSSBOT00000027379.1">
    <property type="protein sequence ID" value="ENSSBOP00000010602.1"/>
    <property type="gene ID" value="ENSSBOG00000022139.1"/>
</dbReference>
<dbReference type="GeneID" id="101046045"/>
<dbReference type="KEGG" id="sbq:101046045"/>
<dbReference type="CTD" id="611"/>
<dbReference type="GeneTree" id="ENSGT01030000234549"/>
<dbReference type="OMA" id="QTAFMGF"/>
<dbReference type="OrthoDB" id="72002at9443"/>
<dbReference type="Proteomes" id="UP000233220">
    <property type="component" value="Unplaced"/>
</dbReference>
<dbReference type="GO" id="GO:0120199">
    <property type="term" value="C:cone photoreceptor outer segment"/>
    <property type="evidence" value="ECO:0007669"/>
    <property type="project" value="Ensembl"/>
</dbReference>
<dbReference type="GO" id="GO:0048471">
    <property type="term" value="C:perinuclear region of cytoplasm"/>
    <property type="evidence" value="ECO:0000250"/>
    <property type="project" value="UniProtKB"/>
</dbReference>
<dbReference type="GO" id="GO:0097381">
    <property type="term" value="C:photoreceptor disc membrane"/>
    <property type="evidence" value="ECO:0007669"/>
    <property type="project" value="UniProtKB-ARBA"/>
</dbReference>
<dbReference type="GO" id="GO:0001917">
    <property type="term" value="C:photoreceptor inner segment"/>
    <property type="evidence" value="ECO:0007669"/>
    <property type="project" value="UniProtKB-SubCell"/>
</dbReference>
<dbReference type="GO" id="GO:0005886">
    <property type="term" value="C:plasma membrane"/>
    <property type="evidence" value="ECO:0000250"/>
    <property type="project" value="UniProtKB"/>
</dbReference>
<dbReference type="GO" id="GO:0004930">
    <property type="term" value="F:G protein-coupled receptor activity"/>
    <property type="evidence" value="ECO:0007669"/>
    <property type="project" value="UniProtKB-KW"/>
</dbReference>
<dbReference type="GO" id="GO:0009881">
    <property type="term" value="F:photoreceptor activity"/>
    <property type="evidence" value="ECO:0007669"/>
    <property type="project" value="UniProtKB-KW"/>
</dbReference>
<dbReference type="GO" id="GO:0071492">
    <property type="term" value="P:cellular response to UV-A"/>
    <property type="evidence" value="ECO:0000250"/>
    <property type="project" value="UniProtKB"/>
</dbReference>
<dbReference type="GO" id="GO:0007602">
    <property type="term" value="P:phototransduction"/>
    <property type="evidence" value="ECO:0007669"/>
    <property type="project" value="UniProtKB-KW"/>
</dbReference>
<dbReference type="GO" id="GO:0007601">
    <property type="term" value="P:visual perception"/>
    <property type="evidence" value="ECO:0007669"/>
    <property type="project" value="UniProtKB-KW"/>
</dbReference>
<dbReference type="CDD" id="cd15076">
    <property type="entry name" value="7tmA_SWS1_opsin"/>
    <property type="match status" value="1"/>
</dbReference>
<dbReference type="FunFam" id="1.20.1070.10:FF:000018">
    <property type="entry name" value="Rhodopsin"/>
    <property type="match status" value="1"/>
</dbReference>
<dbReference type="Gene3D" id="1.20.1070.10">
    <property type="entry name" value="Rhodopsin 7-helix transmembrane proteins"/>
    <property type="match status" value="1"/>
</dbReference>
<dbReference type="InterPro" id="IPR050125">
    <property type="entry name" value="GPCR_opsins"/>
</dbReference>
<dbReference type="InterPro" id="IPR000276">
    <property type="entry name" value="GPCR_Rhodpsn"/>
</dbReference>
<dbReference type="InterPro" id="IPR017452">
    <property type="entry name" value="GPCR_Rhodpsn_7TM"/>
</dbReference>
<dbReference type="InterPro" id="IPR001760">
    <property type="entry name" value="Opsin"/>
</dbReference>
<dbReference type="InterPro" id="IPR001521">
    <property type="entry name" value="Opsin_blue"/>
</dbReference>
<dbReference type="InterPro" id="IPR027430">
    <property type="entry name" value="Retinal_BS"/>
</dbReference>
<dbReference type="PANTHER" id="PTHR24240">
    <property type="entry name" value="OPSIN"/>
    <property type="match status" value="1"/>
</dbReference>
<dbReference type="Pfam" id="PF00001">
    <property type="entry name" value="7tm_1"/>
    <property type="match status" value="1"/>
</dbReference>
<dbReference type="PRINTS" id="PR00237">
    <property type="entry name" value="GPCRRHODOPSN"/>
</dbReference>
<dbReference type="PRINTS" id="PR00238">
    <property type="entry name" value="OPSIN"/>
</dbReference>
<dbReference type="PRINTS" id="PR00574">
    <property type="entry name" value="OPSINBLUE"/>
</dbReference>
<dbReference type="SUPFAM" id="SSF81321">
    <property type="entry name" value="Family A G protein-coupled receptor-like"/>
    <property type="match status" value="1"/>
</dbReference>
<dbReference type="PROSITE" id="PS00237">
    <property type="entry name" value="G_PROTEIN_RECEP_F1_1"/>
    <property type="match status" value="1"/>
</dbReference>
<dbReference type="PROSITE" id="PS50262">
    <property type="entry name" value="G_PROTEIN_RECEP_F1_2"/>
    <property type="match status" value="1"/>
</dbReference>
<dbReference type="PROSITE" id="PS00238">
    <property type="entry name" value="OPSIN"/>
    <property type="match status" value="1"/>
</dbReference>
<feature type="chain" id="PRO_0000197765" description="Short-wave-sensitive opsin 1">
    <location>
        <begin position="1"/>
        <end position="349"/>
    </location>
</feature>
<feature type="topological domain" description="Extracellular" evidence="4">
    <location>
        <begin position="1"/>
        <end position="34"/>
    </location>
</feature>
<feature type="transmembrane region" description="Helical; Name=1" evidence="4">
    <location>
        <begin position="35"/>
        <end position="59"/>
    </location>
</feature>
<feature type="topological domain" description="Cytoplasmic" evidence="4">
    <location>
        <begin position="60"/>
        <end position="71"/>
    </location>
</feature>
<feature type="transmembrane region" description="Helical; Name=2" evidence="4">
    <location>
        <begin position="72"/>
        <end position="97"/>
    </location>
</feature>
<feature type="topological domain" description="Extracellular" evidence="4">
    <location>
        <begin position="98"/>
        <end position="111"/>
    </location>
</feature>
<feature type="transmembrane region" description="Helical; Name=3" evidence="4">
    <location>
        <begin position="112"/>
        <end position="131"/>
    </location>
</feature>
<feature type="topological domain" description="Cytoplasmic" evidence="4">
    <location>
        <begin position="132"/>
        <end position="150"/>
    </location>
</feature>
<feature type="transmembrane region" description="Helical; Name=4" evidence="4">
    <location>
        <begin position="151"/>
        <end position="174"/>
    </location>
</feature>
<feature type="topological domain" description="Extracellular" evidence="4">
    <location>
        <begin position="175"/>
        <end position="200"/>
    </location>
</feature>
<feature type="transmembrane region" description="Helical; Name=5" evidence="4">
    <location>
        <begin position="201"/>
        <end position="228"/>
    </location>
</feature>
<feature type="topological domain" description="Cytoplasmic" evidence="4">
    <location>
        <begin position="229"/>
        <end position="250"/>
    </location>
</feature>
<feature type="transmembrane region" description="Helical; Name=6" evidence="4">
    <location>
        <begin position="251"/>
        <end position="274"/>
    </location>
</feature>
<feature type="topological domain" description="Extracellular" evidence="4">
    <location>
        <begin position="275"/>
        <end position="282"/>
    </location>
</feature>
<feature type="transmembrane region" description="Helical; Name=7" evidence="4">
    <location>
        <begin position="283"/>
        <end position="307"/>
    </location>
</feature>
<feature type="topological domain" description="Cytoplasmic" evidence="4">
    <location>
        <begin position="308"/>
        <end position="349"/>
    </location>
</feature>
<feature type="modified residue" description="N6-(retinylidene)lysine" evidence="1">
    <location>
        <position position="294"/>
    </location>
</feature>
<feature type="glycosylation site" description="N-linked (GlcNAc...) asparagine" evidence="4">
    <location>
        <position position="15"/>
    </location>
</feature>
<feature type="disulfide bond" evidence="5">
    <location>
        <begin position="108"/>
        <end position="185"/>
    </location>
</feature>
<evidence type="ECO:0000250" key="1"/>
<evidence type="ECO:0000250" key="2">
    <source>
        <dbReference type="UniProtKB" id="P03999"/>
    </source>
</evidence>
<evidence type="ECO:0000250" key="3">
    <source>
        <dbReference type="UniProtKB" id="P51491"/>
    </source>
</evidence>
<evidence type="ECO:0000255" key="4"/>
<evidence type="ECO:0000255" key="5">
    <source>
        <dbReference type="PROSITE-ProRule" id="PRU00521"/>
    </source>
</evidence>
<comment type="function">
    <text evidence="2 3">Visual pigments are the light-absorbing molecules that mediate vision. They consist of an apoprotein, opsin, covalently linked to cis-retinal (By similarity). Required for the maintenance of cone outer segment organization in the ventral retina, but not essential for the maintenance of functioning cone photoreceptors (By similarity). Involved in ensuring correct abundance and localization of retinal membrane proteins (By similarity). May increase spectral sensitivity in dim light (By similarity).</text>
</comment>
<comment type="biophysicochemical properties">
    <absorption>
        <max>420 nm</max>
    </absorption>
</comment>
<comment type="subcellular location">
    <subcellularLocation>
        <location evidence="2">Cell membrane</location>
        <topology evidence="4">Multi-pass membrane protein</topology>
    </subcellularLocation>
    <subcellularLocation>
        <location evidence="3">Photoreceptor inner segment</location>
    </subcellularLocation>
    <subcellularLocation>
        <location evidence="3">Cell projection</location>
        <location evidence="3">Cilium</location>
        <location evidence="3">Photoreceptor outer segment</location>
    </subcellularLocation>
    <subcellularLocation>
        <location evidence="2">Cytoplasm</location>
        <location evidence="2">Perinuclear region</location>
    </subcellularLocation>
</comment>
<comment type="PTM">
    <text>Phosphorylated on some or all of the serine and threonine residues present in the C-terminal region.</text>
</comment>
<comment type="similarity">
    <text evidence="5">Belongs to the G-protein coupled receptor 1 family. Opsin subfamily.</text>
</comment>
<name>OPSB_SAIBB</name>
<organism>
    <name type="scientific">Saimiri boliviensis boliviensis</name>
    <name type="common">Bolivian squirrel monkey</name>
    <dbReference type="NCBI Taxonomy" id="39432"/>
    <lineage>
        <taxon>Eukaryota</taxon>
        <taxon>Metazoa</taxon>
        <taxon>Chordata</taxon>
        <taxon>Craniata</taxon>
        <taxon>Vertebrata</taxon>
        <taxon>Euteleostomi</taxon>
        <taxon>Mammalia</taxon>
        <taxon>Eutheria</taxon>
        <taxon>Euarchontoglires</taxon>
        <taxon>Primates</taxon>
        <taxon>Haplorrhini</taxon>
        <taxon>Platyrrhini</taxon>
        <taxon>Cebidae</taxon>
        <taxon>Saimiriinae</taxon>
        <taxon>Saimiri</taxon>
    </lineage>
</organism>
<protein>
    <recommendedName>
        <fullName>Short-wave-sensitive opsin 1</fullName>
    </recommendedName>
    <alternativeName>
        <fullName>Blue cone photoreceptor pigment</fullName>
    </alternativeName>
    <alternativeName>
        <fullName>Blue-sensitive opsin</fullName>
        <shortName>BOP</shortName>
    </alternativeName>
</protein>
<reference key="1">
    <citation type="journal article" date="1997" name="J. Mol. Evol.">
        <title>Sequences and evolution of human and squirrel monkey blue opsin genes.</title>
        <authorList>
            <person name="Shimmin L.C."/>
            <person name="Mai P."/>
            <person name="Li W.H."/>
        </authorList>
    </citation>
    <scope>NUCLEOTIDE SEQUENCE [GENOMIC DNA]</scope>
</reference>
<gene>
    <name type="primary">OPN1SW</name>
    <name type="synonym">BCP</name>
</gene>
<accession>O13092</accession>
<keyword id="KW-1003">Cell membrane</keyword>
<keyword id="KW-0966">Cell projection</keyword>
<keyword id="KW-0157">Chromophore</keyword>
<keyword id="KW-0963">Cytoplasm</keyword>
<keyword id="KW-1015">Disulfide bond</keyword>
<keyword id="KW-0297">G-protein coupled receptor</keyword>
<keyword id="KW-0325">Glycoprotein</keyword>
<keyword id="KW-0472">Membrane</keyword>
<keyword id="KW-0597">Phosphoprotein</keyword>
<keyword id="KW-0600">Photoreceptor protein</keyword>
<keyword id="KW-0675">Receptor</keyword>
<keyword id="KW-1185">Reference proteome</keyword>
<keyword id="KW-0681">Retinal protein</keyword>
<keyword id="KW-0716">Sensory transduction</keyword>
<keyword id="KW-0807">Transducer</keyword>
<keyword id="KW-0812">Transmembrane</keyword>
<keyword id="KW-1133">Transmembrane helix</keyword>
<keyword id="KW-0844">Vision</keyword>
<proteinExistence type="evidence at protein level"/>
<sequence length="349" mass="39123">MSKMPEEEEFYLFKNISSVGPWDGPQYHIAPVWAFQLQAAFMGIVFLAGLPLNSMVLVATVRYKKLRHPLNYVLVNVSVGGFLLCIFSVLPVFVNSCNGYFVFGRHVCALEGFLGTVAGLVTGWSLAFLAFERYIVICKPFGNFRFSSKHALMVVLTTWTIGIGVSIPPFFGWSRYIAEGLQCSCGPDWYTVGTKYRSEYYTWFLFIFCFIVPLSLICFSYAQLLRALKAVAAQQQESATTQKAEREVSRMVVVMVGSFCVCYVPYAALAMYMVNNRNHGLDLRLVSIPAFFSKSSCIYNPIIYCFMNKQFRACIMEMVCGKAMTDESDISSSQKTEVSTVSSSQVGPN</sequence>